<gene>
    <name evidence="2" type="primary">Sorbs1</name>
</gene>
<feature type="chain" id="PRO_0000072187" description="Sorbin and SH3 domain-containing protein 1">
    <location>
        <begin position="1" status="less than"/>
        <end position="35" status="greater than"/>
    </location>
</feature>
<feature type="domain" description="SoHo" evidence="2 4">
    <location>
        <begin position="1" status="less than"/>
        <end position="8"/>
    </location>
</feature>
<feature type="domain" description="SH3" evidence="2 3">
    <location>
        <begin position="22" status="less than"/>
        <end position="35" status="greater than"/>
    </location>
</feature>
<feature type="modified residue" description="Phosphoserine" evidence="8">
    <location>
        <position position="15"/>
    </location>
</feature>
<feature type="non-consecutive residues" evidence="6">
    <location>
        <begin position="21"/>
        <end position="22"/>
    </location>
</feature>
<feature type="non-terminal residue" evidence="6">
    <location>
        <position position="1"/>
    </location>
</feature>
<feature type="non-terminal residue" evidence="6">
    <location>
        <position position="35"/>
    </location>
</feature>
<accession>P84109</accession>
<name>SRBS1_RAT</name>
<dbReference type="SMR" id="P84109"/>
<dbReference type="STRING" id="10116.ENSRNOP00000021289"/>
<dbReference type="GlyGen" id="P84109">
    <property type="glycosylation" value="1 site, 1 O-linked glycan (1 site)"/>
</dbReference>
<dbReference type="iPTMnet" id="P84109"/>
<dbReference type="PaxDb" id="10116-ENSRNOP00000021289"/>
<dbReference type="AGR" id="RGD:1586598"/>
<dbReference type="RGD" id="1586598">
    <property type="gene designation" value="Sorbs1"/>
</dbReference>
<dbReference type="eggNOG" id="KOG4225">
    <property type="taxonomic scope" value="Eukaryota"/>
</dbReference>
<dbReference type="InParanoid" id="P84109"/>
<dbReference type="Proteomes" id="UP000002494">
    <property type="component" value="Unplaced"/>
</dbReference>
<dbReference type="GO" id="GO:0005912">
    <property type="term" value="C:adherens junction"/>
    <property type="evidence" value="ECO:0000250"/>
    <property type="project" value="UniProtKB"/>
</dbReference>
<dbReference type="GO" id="GO:0030055">
    <property type="term" value="C:cell-substrate junction"/>
    <property type="evidence" value="ECO:0000250"/>
    <property type="project" value="UniProtKB"/>
</dbReference>
<dbReference type="GO" id="GO:0005856">
    <property type="term" value="C:cytoskeleton"/>
    <property type="evidence" value="ECO:0000266"/>
    <property type="project" value="RGD"/>
</dbReference>
<dbReference type="GO" id="GO:0005829">
    <property type="term" value="C:cytosol"/>
    <property type="evidence" value="ECO:0000266"/>
    <property type="project" value="RGD"/>
</dbReference>
<dbReference type="GO" id="GO:0016600">
    <property type="term" value="C:flotillin complex"/>
    <property type="evidence" value="ECO:0000266"/>
    <property type="project" value="RGD"/>
</dbReference>
<dbReference type="GO" id="GO:0005925">
    <property type="term" value="C:focal adhesion"/>
    <property type="evidence" value="ECO:0007669"/>
    <property type="project" value="UniProtKB-SubCell"/>
</dbReference>
<dbReference type="GO" id="GO:0005899">
    <property type="term" value="C:insulin receptor complex"/>
    <property type="evidence" value="ECO:0000314"/>
    <property type="project" value="RGD"/>
</dbReference>
<dbReference type="GO" id="GO:0016020">
    <property type="term" value="C:membrane"/>
    <property type="evidence" value="ECO:0000266"/>
    <property type="project" value="RGD"/>
</dbReference>
<dbReference type="GO" id="GO:0045121">
    <property type="term" value="C:membrane raft"/>
    <property type="evidence" value="ECO:0000250"/>
    <property type="project" value="UniProtKB"/>
</dbReference>
<dbReference type="GO" id="GO:0016363">
    <property type="term" value="C:nuclear matrix"/>
    <property type="evidence" value="ECO:0000266"/>
    <property type="project" value="RGD"/>
</dbReference>
<dbReference type="GO" id="GO:0005634">
    <property type="term" value="C:nucleus"/>
    <property type="evidence" value="ECO:0000250"/>
    <property type="project" value="UniProtKB"/>
</dbReference>
<dbReference type="GO" id="GO:0001725">
    <property type="term" value="C:stress fiber"/>
    <property type="evidence" value="ECO:0000250"/>
    <property type="project" value="UniProtKB"/>
</dbReference>
<dbReference type="GO" id="GO:0045202">
    <property type="term" value="C:synapse"/>
    <property type="evidence" value="ECO:0000266"/>
    <property type="project" value="RGD"/>
</dbReference>
<dbReference type="GO" id="GO:0005158">
    <property type="term" value="F:insulin receptor binding"/>
    <property type="evidence" value="ECO:0000314"/>
    <property type="project" value="RGD"/>
</dbReference>
<dbReference type="GO" id="GO:0019901">
    <property type="term" value="F:protein kinase binding"/>
    <property type="evidence" value="ECO:0000266"/>
    <property type="project" value="RGD"/>
</dbReference>
<dbReference type="GO" id="GO:0030159">
    <property type="term" value="F:signaling receptor complex adaptor activity"/>
    <property type="evidence" value="ECO:0000266"/>
    <property type="project" value="RGD"/>
</dbReference>
<dbReference type="GO" id="GO:0031625">
    <property type="term" value="F:ubiquitin protein ligase binding"/>
    <property type="evidence" value="ECO:0000353"/>
    <property type="project" value="RGD"/>
</dbReference>
<dbReference type="GO" id="GO:0095500">
    <property type="term" value="P:acetylcholine receptor signaling pathway"/>
    <property type="evidence" value="ECO:0000266"/>
    <property type="project" value="RGD"/>
</dbReference>
<dbReference type="GO" id="GO:0032869">
    <property type="term" value="P:cellular response to insulin stimulus"/>
    <property type="evidence" value="ECO:0000266"/>
    <property type="project" value="RGD"/>
</dbReference>
<dbReference type="GO" id="GO:0048041">
    <property type="term" value="P:focal adhesion assembly"/>
    <property type="evidence" value="ECO:0000250"/>
    <property type="project" value="UniProtKB"/>
</dbReference>
<dbReference type="GO" id="GO:0008286">
    <property type="term" value="P:insulin receptor signaling pathway"/>
    <property type="evidence" value="ECO:0000250"/>
    <property type="project" value="UniProtKB"/>
</dbReference>
<dbReference type="GO" id="GO:0046326">
    <property type="term" value="P:positive regulation of D-glucose import"/>
    <property type="evidence" value="ECO:0000250"/>
    <property type="project" value="UniProtKB"/>
</dbReference>
<dbReference type="GO" id="GO:0045725">
    <property type="term" value="P:positive regulation of glycogen biosynthetic process"/>
    <property type="evidence" value="ECO:0000266"/>
    <property type="project" value="RGD"/>
</dbReference>
<dbReference type="GO" id="GO:0046628">
    <property type="term" value="P:positive regulation of insulin receptor signaling pathway"/>
    <property type="evidence" value="ECO:0000250"/>
    <property type="project" value="UniProtKB"/>
</dbReference>
<dbReference type="GO" id="GO:0046889">
    <property type="term" value="P:positive regulation of lipid biosynthetic process"/>
    <property type="evidence" value="ECO:0000266"/>
    <property type="project" value="RGD"/>
</dbReference>
<dbReference type="GO" id="GO:1903078">
    <property type="term" value="P:positive regulation of protein localization to plasma membrane"/>
    <property type="evidence" value="ECO:0000266"/>
    <property type="project" value="RGD"/>
</dbReference>
<dbReference type="GO" id="GO:1904393">
    <property type="term" value="P:regulation of skeletal muscle acetylcholine-gated channel clustering"/>
    <property type="evidence" value="ECO:0000266"/>
    <property type="project" value="RGD"/>
</dbReference>
<dbReference type="GO" id="GO:0014823">
    <property type="term" value="P:response to activity"/>
    <property type="evidence" value="ECO:0000270"/>
    <property type="project" value="RGD"/>
</dbReference>
<dbReference type="GO" id="GO:0032868">
    <property type="term" value="P:response to insulin"/>
    <property type="evidence" value="ECO:0000270"/>
    <property type="project" value="RGD"/>
</dbReference>
<dbReference type="GO" id="GO:1902065">
    <property type="term" value="P:response to L-glutamate"/>
    <property type="evidence" value="ECO:0000270"/>
    <property type="project" value="RGD"/>
</dbReference>
<dbReference type="GO" id="GO:0033993">
    <property type="term" value="P:response to lipid"/>
    <property type="evidence" value="ECO:0000270"/>
    <property type="project" value="RGD"/>
</dbReference>
<dbReference type="GO" id="GO:0042594">
    <property type="term" value="P:response to starvation"/>
    <property type="evidence" value="ECO:0000270"/>
    <property type="project" value="RGD"/>
</dbReference>
<dbReference type="GO" id="GO:0043149">
    <property type="term" value="P:stress fiber assembly"/>
    <property type="evidence" value="ECO:0000250"/>
    <property type="project" value="UniProtKB"/>
</dbReference>
<organism>
    <name type="scientific">Rattus norvegicus</name>
    <name type="common">Rat</name>
    <dbReference type="NCBI Taxonomy" id="10116"/>
    <lineage>
        <taxon>Eukaryota</taxon>
        <taxon>Metazoa</taxon>
        <taxon>Chordata</taxon>
        <taxon>Craniata</taxon>
        <taxon>Vertebrata</taxon>
        <taxon>Euteleostomi</taxon>
        <taxon>Mammalia</taxon>
        <taxon>Eutheria</taxon>
        <taxon>Euarchontoglires</taxon>
        <taxon>Glires</taxon>
        <taxon>Rodentia</taxon>
        <taxon>Myomorpha</taxon>
        <taxon>Muroidea</taxon>
        <taxon>Muridae</taxon>
        <taxon>Murinae</taxon>
        <taxon>Rattus</taxon>
    </lineage>
</organism>
<protein>
    <recommendedName>
        <fullName>Sorbin and SH3 domain-containing protein 1</fullName>
    </recommendedName>
    <alternativeName>
        <fullName>Ponsin</fullName>
    </alternativeName>
    <alternativeName>
        <fullName>SH3P12</fullName>
    </alternativeName>
</protein>
<keyword id="KW-0965">Cell junction</keyword>
<keyword id="KW-1003">Cell membrane</keyword>
<keyword id="KW-0963">Cytoplasm</keyword>
<keyword id="KW-0206">Cytoskeleton</keyword>
<keyword id="KW-0903">Direct protein sequencing</keyword>
<keyword id="KW-0325">Glycoprotein</keyword>
<keyword id="KW-0472">Membrane</keyword>
<keyword id="KW-0539">Nucleus</keyword>
<keyword id="KW-0597">Phosphoprotein</keyword>
<keyword id="KW-1185">Reference proteome</keyword>
<keyword id="KW-0677">Repeat</keyword>
<keyword id="KW-0728">SH3 domain</keyword>
<keyword id="KW-0813">Transport</keyword>
<reference evidence="7" key="1">
    <citation type="journal article" date="1999" name="J. Cell Biol.">
        <title>Ponsin/SH3P12: an l-afadin- and vinculin-binding protein localized at cell-cell and cell-matrix adherens junctions.</title>
        <authorList>
            <person name="Mandai K."/>
            <person name="Nakanishi H."/>
            <person name="Satoh A."/>
            <person name="Takahashi K."/>
            <person name="Satoh K."/>
            <person name="Nishioka H."/>
            <person name="Mizoguchi A."/>
            <person name="Takai Y."/>
        </authorList>
    </citation>
    <scope>PROTEIN SEQUENCE</scope>
    <scope>SUBCELLULAR LOCATION</scope>
    <source>
        <tissue evidence="5">Liver</tissue>
    </source>
</reference>
<reference key="2">
    <citation type="journal article" date="2012" name="Nat. Commun.">
        <title>Quantitative maps of protein phosphorylation sites across 14 different rat organs and tissues.</title>
        <authorList>
            <person name="Lundby A."/>
            <person name="Secher A."/>
            <person name="Lage K."/>
            <person name="Nordsborg N.B."/>
            <person name="Dmytriyev A."/>
            <person name="Lundby C."/>
            <person name="Olsen J.V."/>
        </authorList>
    </citation>
    <scope>PHOSPHORYLATION [LARGE SCALE ANALYSIS] AT SER-15</scope>
    <scope>IDENTIFICATION BY MASS SPECTROMETRY [LARGE SCALE ANALYSIS]</scope>
</reference>
<sequence>LNRDDDSDLHSPRYSFSEDTKCDDGWFVGTSRRTK</sequence>
<evidence type="ECO:0000250" key="1"/>
<evidence type="ECO:0000250" key="2">
    <source>
        <dbReference type="UniProtKB" id="Q62417"/>
    </source>
</evidence>
<evidence type="ECO:0000255" key="3">
    <source>
        <dbReference type="PROSITE-ProRule" id="PRU00192"/>
    </source>
</evidence>
<evidence type="ECO:0000255" key="4">
    <source>
        <dbReference type="PROSITE-ProRule" id="PRU00195"/>
    </source>
</evidence>
<evidence type="ECO:0000269" key="5">
    <source>
    </source>
</evidence>
<evidence type="ECO:0000303" key="6">
    <source>
    </source>
</evidence>
<evidence type="ECO:0000305" key="7"/>
<evidence type="ECO:0007744" key="8">
    <source>
    </source>
</evidence>
<proteinExistence type="evidence at protein level"/>
<comment type="function">
    <text evidence="2">Plays a role in tyrosine phosphorylation of CBL by linking CBL to the insulin receptor. Required for insulin-stimulated glucose transport. Involved in formation of actin stress fibers and focal adhesions (By similarity).</text>
</comment>
<comment type="subunit">
    <text evidence="1">Interacts with the long isoform of AFDN and with VCL. AFDN and VCL bind to SORBS1 in a competitive manner and do not form a ternary complex. Interacts with ABL1, CBL, CBLB and INPPL1/SHIP2 through the third SH3 domain. Interaction with ABL1 occurs only after insulin stimulation while this has no effect on the interaction with INPPL1. Interacts with the insulin receptor but dissociates from it following insulin stimulation. Also interacts with SCA7, PTK2/FAK1 and flotillin. Interacts (via SH3 domain 2) with PXN. Interacts (via third SH3 domain) with the Ten-1 ICD form of TENM1; the interaction induces the translocation of SORBS1 to the nucleus (By similarity).</text>
</comment>
<comment type="subcellular location">
    <subcellularLocation>
        <location evidence="5">Cell junction</location>
        <location evidence="5">Adherens junction</location>
    </subcellularLocation>
    <subcellularLocation>
        <location evidence="5">Cell membrane</location>
    </subcellularLocation>
    <subcellularLocation>
        <location evidence="5">Cytoplasm</location>
        <location evidence="5">Cytoskeleton</location>
    </subcellularLocation>
    <subcellularLocation>
        <location evidence="1">Cell junction</location>
        <location evidence="1">Focal adhesion</location>
    </subcellularLocation>
    <subcellularLocation>
        <location evidence="1">Nucleus</location>
    </subcellularLocation>
    <subcellularLocation>
        <location evidence="1">Nucleus matrix</location>
    </subcellularLocation>
    <text evidence="1">Colocalized with PXN at focal adhesions during myogenic differentiation. Colocalizes with the Ten-1 ICD form of TENM1 in the nucleus (By similarity). Colocalizes with actin stress fibers. Also detected at the plasma membrane and in neuronal intranuclear inclusions.</text>
</comment>
<comment type="PTM">
    <text evidence="1">O-glycosylated.</text>
</comment>